<organism>
    <name type="scientific">Legionella pneumophila (strain Corby)</name>
    <dbReference type="NCBI Taxonomy" id="400673"/>
    <lineage>
        <taxon>Bacteria</taxon>
        <taxon>Pseudomonadati</taxon>
        <taxon>Pseudomonadota</taxon>
        <taxon>Gammaproteobacteria</taxon>
        <taxon>Legionellales</taxon>
        <taxon>Legionellaceae</taxon>
        <taxon>Legionella</taxon>
    </lineage>
</organism>
<gene>
    <name evidence="1" type="primary">psd</name>
    <name type="ordered locus">LPC_3289</name>
</gene>
<accession>A5IIH5</accession>
<name>PSD_LEGPC</name>
<feature type="chain" id="PRO_1000026556" description="Phosphatidylserine decarboxylase beta chain" evidence="1">
    <location>
        <begin position="1"/>
        <end position="248"/>
    </location>
</feature>
<feature type="chain" id="PRO_1000026557" description="Phosphatidylserine decarboxylase alpha chain" evidence="1">
    <location>
        <begin position="249"/>
        <end position="283"/>
    </location>
</feature>
<feature type="active site" description="Charge relay system; for autoendoproteolytic cleavage activity" evidence="1">
    <location>
        <position position="89"/>
    </location>
</feature>
<feature type="active site" description="Charge relay system; for autoendoproteolytic cleavage activity" evidence="1">
    <location>
        <position position="146"/>
    </location>
</feature>
<feature type="active site" description="Charge relay system; for autoendoproteolytic cleavage activity" evidence="1">
    <location>
        <position position="249"/>
    </location>
</feature>
<feature type="active site" description="Schiff-base intermediate with substrate; via pyruvic acid; for decarboxylase activity" evidence="1">
    <location>
        <position position="249"/>
    </location>
</feature>
<feature type="site" description="Cleavage (non-hydrolytic); by autocatalysis" evidence="1">
    <location>
        <begin position="248"/>
        <end position="249"/>
    </location>
</feature>
<feature type="modified residue" description="Pyruvic acid (Ser); by autocatalysis" evidence="1">
    <location>
        <position position="249"/>
    </location>
</feature>
<proteinExistence type="inferred from homology"/>
<comment type="function">
    <text evidence="1">Catalyzes the formation of phosphatidylethanolamine (PtdEtn) from phosphatidylserine (PtdSer).</text>
</comment>
<comment type="catalytic activity">
    <reaction evidence="1">
        <text>a 1,2-diacyl-sn-glycero-3-phospho-L-serine + H(+) = a 1,2-diacyl-sn-glycero-3-phosphoethanolamine + CO2</text>
        <dbReference type="Rhea" id="RHEA:20828"/>
        <dbReference type="ChEBI" id="CHEBI:15378"/>
        <dbReference type="ChEBI" id="CHEBI:16526"/>
        <dbReference type="ChEBI" id="CHEBI:57262"/>
        <dbReference type="ChEBI" id="CHEBI:64612"/>
        <dbReference type="EC" id="4.1.1.65"/>
    </reaction>
</comment>
<comment type="cofactor">
    <cofactor evidence="1">
        <name>pyruvate</name>
        <dbReference type="ChEBI" id="CHEBI:15361"/>
    </cofactor>
    <text evidence="1">Binds 1 pyruvoyl group covalently per subunit.</text>
</comment>
<comment type="pathway">
    <text evidence="1">Phospholipid metabolism; phosphatidylethanolamine biosynthesis; phosphatidylethanolamine from CDP-diacylglycerol: step 2/2.</text>
</comment>
<comment type="subunit">
    <text evidence="1">Heterodimer of a large membrane-associated beta subunit and a small pyruvoyl-containing alpha subunit.</text>
</comment>
<comment type="subcellular location">
    <subcellularLocation>
        <location evidence="1">Cell membrane</location>
        <topology evidence="1">Peripheral membrane protein</topology>
    </subcellularLocation>
</comment>
<comment type="PTM">
    <text evidence="1">Is synthesized initially as an inactive proenzyme. Formation of the active enzyme involves a self-maturation process in which the active site pyruvoyl group is generated from an internal serine residue via an autocatalytic post-translational modification. Two non-identical subunits are generated from the proenzyme in this reaction, and the pyruvate is formed at the N-terminus of the alpha chain, which is derived from the carboxyl end of the proenzyme. The autoendoproteolytic cleavage occurs by a canonical serine protease mechanism, in which the side chain hydroxyl group of the serine supplies its oxygen atom to form the C-terminus of the beta chain, while the remainder of the serine residue undergoes an oxidative deamination to produce ammonia and the pyruvoyl prosthetic group on the alpha chain. During this reaction, the Ser that is part of the protease active site of the proenzyme becomes the pyruvoyl prosthetic group, which constitutes an essential element of the active site of the mature decarboxylase.</text>
</comment>
<comment type="similarity">
    <text evidence="1">Belongs to the phosphatidylserine decarboxylase family. PSD-B subfamily. Prokaryotic type I sub-subfamily.</text>
</comment>
<evidence type="ECO:0000255" key="1">
    <source>
        <dbReference type="HAMAP-Rule" id="MF_00662"/>
    </source>
</evidence>
<reference key="1">
    <citation type="submission" date="2006-11" db="EMBL/GenBank/DDBJ databases">
        <title>Identification and characterization of a new conjugation/ type IVA secretion system (trb/tra) of L. pneumophila Corby localized on a mobile genomic island.</title>
        <authorList>
            <person name="Gloeckner G."/>
            <person name="Albert-Weissenberger C."/>
            <person name="Weinmann E."/>
            <person name="Jacobi S."/>
            <person name="Schunder E."/>
            <person name="Steinert M."/>
            <person name="Buchrieser C."/>
            <person name="Hacker J."/>
            <person name="Heuner K."/>
        </authorList>
    </citation>
    <scope>NUCLEOTIDE SEQUENCE [LARGE SCALE GENOMIC DNA]</scope>
    <source>
        <strain>Corby</strain>
    </source>
</reference>
<keyword id="KW-1003">Cell membrane</keyword>
<keyword id="KW-0210">Decarboxylase</keyword>
<keyword id="KW-0444">Lipid biosynthesis</keyword>
<keyword id="KW-0443">Lipid metabolism</keyword>
<keyword id="KW-0456">Lyase</keyword>
<keyword id="KW-0472">Membrane</keyword>
<keyword id="KW-0594">Phospholipid biosynthesis</keyword>
<keyword id="KW-1208">Phospholipid metabolism</keyword>
<keyword id="KW-0670">Pyruvate</keyword>
<keyword id="KW-0865">Zymogen</keyword>
<dbReference type="EC" id="4.1.1.65" evidence="1"/>
<dbReference type="EMBL" id="CP000675">
    <property type="protein sequence ID" value="ABQ57175.1"/>
    <property type="molecule type" value="Genomic_DNA"/>
</dbReference>
<dbReference type="SMR" id="A5IIH5"/>
<dbReference type="KEGG" id="lpc:LPC_3289"/>
<dbReference type="HOGENOM" id="CLU_029061_4_1_6"/>
<dbReference type="UniPathway" id="UPA00558">
    <property type="reaction ID" value="UER00616"/>
</dbReference>
<dbReference type="GO" id="GO:0005886">
    <property type="term" value="C:plasma membrane"/>
    <property type="evidence" value="ECO:0007669"/>
    <property type="project" value="UniProtKB-SubCell"/>
</dbReference>
<dbReference type="GO" id="GO:0004609">
    <property type="term" value="F:phosphatidylserine decarboxylase activity"/>
    <property type="evidence" value="ECO:0007669"/>
    <property type="project" value="UniProtKB-UniRule"/>
</dbReference>
<dbReference type="GO" id="GO:0006646">
    <property type="term" value="P:phosphatidylethanolamine biosynthetic process"/>
    <property type="evidence" value="ECO:0007669"/>
    <property type="project" value="UniProtKB-UniRule"/>
</dbReference>
<dbReference type="HAMAP" id="MF_00662">
    <property type="entry name" value="PS_decarb_PSD_B_type1"/>
    <property type="match status" value="1"/>
</dbReference>
<dbReference type="InterPro" id="IPR003817">
    <property type="entry name" value="PS_Dcarbxylase"/>
</dbReference>
<dbReference type="InterPro" id="IPR033177">
    <property type="entry name" value="PSD-B"/>
</dbReference>
<dbReference type="InterPro" id="IPR033178">
    <property type="entry name" value="PSD_type1_pro"/>
</dbReference>
<dbReference type="NCBIfam" id="TIGR00163">
    <property type="entry name" value="PS_decarb"/>
    <property type="match status" value="1"/>
</dbReference>
<dbReference type="PANTHER" id="PTHR10067">
    <property type="entry name" value="PHOSPHATIDYLSERINE DECARBOXYLASE"/>
    <property type="match status" value="1"/>
</dbReference>
<dbReference type="PANTHER" id="PTHR10067:SF6">
    <property type="entry name" value="PHOSPHATIDYLSERINE DECARBOXYLASE PROENZYME, MITOCHONDRIAL"/>
    <property type="match status" value="1"/>
</dbReference>
<dbReference type="Pfam" id="PF02666">
    <property type="entry name" value="PS_Dcarbxylase"/>
    <property type="match status" value="1"/>
</dbReference>
<protein>
    <recommendedName>
        <fullName evidence="1">Phosphatidylserine decarboxylase proenzyme</fullName>
        <ecNumber evidence="1">4.1.1.65</ecNumber>
    </recommendedName>
    <component>
        <recommendedName>
            <fullName evidence="1">Phosphatidylserine decarboxylase alpha chain</fullName>
        </recommendedName>
    </component>
    <component>
        <recommendedName>
            <fullName evidence="1">Phosphatidylserine decarboxylase beta chain</fullName>
        </recommendedName>
    </component>
</protein>
<sequence>MFRDVLKTLPQYLIPKHGITALAGYFADVKSPRLKNFLIRNFIRKFDVDMSEALIEDPKSYDCFNDFFIRHLKPECRPLSQSDVICPVDGCISEIGKIERGQLLQAKGKYYSVQELLACDGQLAEQFVQGQFATLYLSPKDYHRVHMPIDAELVSMTYIPGALFSVQPATTRVVPKLFARNERLAIFFKTKIGPMVMVMVGATIVGAIGTSWHGDVKRAKKLERFDYSERFPDKIISQGSEMGYFKLGSTVVLLFANGEKIQWDKELLAGSKIQLGKPMAIIT</sequence>